<feature type="chain" id="PRO_0000384842" description="Uncharacterized protein ORF91b">
    <location>
        <begin position="1"/>
        <end position="91"/>
    </location>
</feature>
<dbReference type="EMBL" id="EF432053">
    <property type="protein sequence ID" value="ABP73401.1"/>
    <property type="molecule type" value="Genomic_DNA"/>
</dbReference>
<dbReference type="RefSeq" id="YP_001210315.1">
    <property type="nucleotide sequence ID" value="NC_009452.1"/>
</dbReference>
<dbReference type="SMR" id="A4ZU97"/>
<dbReference type="GeneID" id="5129857"/>
<dbReference type="KEGG" id="vg:5129857"/>
<dbReference type="Proteomes" id="UP000000513">
    <property type="component" value="Segment"/>
</dbReference>
<organismHost>
    <name type="scientific">Acidianus convivator</name>
    <dbReference type="NCBI Taxonomy" id="269667"/>
</organismHost>
<organism>
    <name type="scientific">Acidianus bottle-shaped virus (isolate Italy/Pozzuoli)</name>
    <name type="common">ABV</name>
    <dbReference type="NCBI Taxonomy" id="654911"/>
    <lineage>
        <taxon>Viruses</taxon>
        <taxon>Viruses incertae sedis</taxon>
        <taxon>Ampullaviridae</taxon>
        <taxon>Bottigliavirus</taxon>
        <taxon>Bottigliavirus ABV</taxon>
    </lineage>
</organism>
<reference key="1">
    <citation type="journal article" date="2007" name="Virology">
        <title>Genome of the Acidianus bottle-shaped virus and insights into the replication and packaging mechanisms.</title>
        <authorList>
            <person name="Peng X."/>
            <person name="Basta T."/>
            <person name="Haring M."/>
            <person name="Garrett R.A."/>
            <person name="Prangishvili D."/>
        </authorList>
    </citation>
    <scope>NUCLEOTIDE SEQUENCE [GENOMIC DNA]</scope>
</reference>
<gene>
    <name type="ORF">ORF91b</name>
</gene>
<name>Y091B_ABVP</name>
<accession>A4ZU97</accession>
<proteinExistence type="predicted"/>
<sequence>MNTLKIYALMKKHKLIREPEKADDYLLQKLDREIELIEHGPLFAKKVTAQISDHDKELVDFIFSLIKEECYKESYTFEKITDCLMKFEEKI</sequence>
<protein>
    <recommendedName>
        <fullName>Uncharacterized protein ORF91b</fullName>
    </recommendedName>
</protein>
<keyword id="KW-1185">Reference proteome</keyword>